<gene>
    <name evidence="1" type="primary">ctaA</name>
    <name type="ordered locus">BC_3946</name>
</gene>
<sequence length="311" mass="34623">MQRFIKWLAVITSLDLLIVLLGGALVTKTGSGQGCGKSWPLCNGEFVPSNLSMETIIELSHRLTSGSAGILVTLLCILSWKYYKHVRETKTLAILSFVFLVAQALMGAAAVVWGQMPAVLAIHFGISLISFASVILLTCLIFEIDQKFDARSLIMDKKMKFHIYGVTIYSYIVVYTGALVRHERASLACPDFPLCSKNRPMPTQLHEWVQMGHRVAAMLIFAWILYAMILAIRHYKQQPVVYWGWIISFILVTLQAVVGVLVVFTNASLAMALLHSLFISCLFAVLCYLVMLGTRSKVNAKEAELTSKQTK</sequence>
<accession>Q819N0</accession>
<proteinExistence type="inferred from homology"/>
<feature type="chain" id="PRO_0000348968" description="Heme A synthase">
    <location>
        <begin position="1"/>
        <end position="311"/>
    </location>
</feature>
<feature type="topological domain" description="Cytoplasmic" evidence="1">
    <location>
        <begin position="1"/>
        <end position="6"/>
    </location>
</feature>
<feature type="transmembrane region" description="Helical" evidence="1">
    <location>
        <begin position="7"/>
        <end position="27"/>
    </location>
</feature>
<feature type="topological domain" description="Extracellular" evidence="1">
    <location>
        <begin position="28"/>
        <end position="62"/>
    </location>
</feature>
<feature type="transmembrane region" description="Helical" evidence="1">
    <location>
        <begin position="63"/>
        <end position="83"/>
    </location>
</feature>
<feature type="topological domain" description="Cytoplasmic" evidence="1">
    <location>
        <begin position="84"/>
        <end position="91"/>
    </location>
</feature>
<feature type="transmembrane region" description="Helical" evidence="1">
    <location>
        <begin position="92"/>
        <end position="112"/>
    </location>
</feature>
<feature type="topological domain" description="Extracellular" evidence="1">
    <location>
        <begin position="113"/>
        <end position="121"/>
    </location>
</feature>
<feature type="transmembrane region" description="Helical" evidence="1">
    <location>
        <begin position="122"/>
        <end position="142"/>
    </location>
</feature>
<feature type="topological domain" description="Cytoplasmic" evidence="1">
    <location>
        <begin position="143"/>
        <end position="159"/>
    </location>
</feature>
<feature type="transmembrane region" description="Helical" evidence="1">
    <location>
        <begin position="160"/>
        <end position="180"/>
    </location>
</feature>
<feature type="topological domain" description="Extracellular" evidence="1">
    <location>
        <begin position="181"/>
        <end position="211"/>
    </location>
</feature>
<feature type="transmembrane region" description="Helical" evidence="1">
    <location>
        <begin position="212"/>
        <end position="232"/>
    </location>
</feature>
<feature type="topological domain" description="Cytoplasmic" evidence="1">
    <location>
        <begin position="233"/>
        <end position="243"/>
    </location>
</feature>
<feature type="transmembrane region" description="Helical" evidence="1">
    <location>
        <begin position="244"/>
        <end position="264"/>
    </location>
</feature>
<feature type="topological domain" description="Extracellular" evidence="1">
    <location>
        <begin position="265"/>
        <end position="271"/>
    </location>
</feature>
<feature type="transmembrane region" description="Helical" evidence="1">
    <location>
        <begin position="272"/>
        <end position="292"/>
    </location>
</feature>
<feature type="topological domain" description="Cytoplasmic" evidence="1">
    <location>
        <begin position="293"/>
        <end position="311"/>
    </location>
</feature>
<feature type="active site" evidence="1">
    <location>
        <position position="58"/>
    </location>
</feature>
<feature type="binding site" description="axial binding residue" evidence="1">
    <location>
        <position position="61"/>
    </location>
    <ligand>
        <name>heme o</name>
        <dbReference type="ChEBI" id="CHEBI:24480"/>
    </ligand>
    <ligandPart>
        <name>Fe</name>
        <dbReference type="ChEBI" id="CHEBI:18248"/>
    </ligandPart>
</feature>
<feature type="binding site" description="axial binding residue" evidence="1">
    <location>
        <position position="123"/>
    </location>
    <ligand>
        <name>heme o</name>
        <dbReference type="ChEBI" id="CHEBI:24480"/>
    </ligand>
    <ligandPart>
        <name>Fe</name>
        <dbReference type="ChEBI" id="CHEBI:18248"/>
    </ligandPart>
</feature>
<feature type="binding site" description="axial binding residue" evidence="1">
    <location>
        <position position="213"/>
    </location>
    <ligand>
        <name>heme b</name>
        <dbReference type="ChEBI" id="CHEBI:60344"/>
    </ligand>
    <ligandPart>
        <name>Fe</name>
        <dbReference type="ChEBI" id="CHEBI:18248"/>
    </ligandPart>
</feature>
<feature type="binding site" description="axial binding residue" evidence="1">
    <location>
        <position position="275"/>
    </location>
    <ligand>
        <name>heme b</name>
        <dbReference type="ChEBI" id="CHEBI:60344"/>
    </ligand>
    <ligandPart>
        <name>Fe</name>
        <dbReference type="ChEBI" id="CHEBI:18248"/>
    </ligandPart>
</feature>
<feature type="disulfide bond" description="Essential for catalytic activity" evidence="1">
    <location>
        <begin position="35"/>
        <end position="42"/>
    </location>
</feature>
<feature type="disulfide bond" evidence="1">
    <location>
        <begin position="189"/>
        <end position="195"/>
    </location>
</feature>
<dbReference type="EC" id="1.17.99.9" evidence="1"/>
<dbReference type="EMBL" id="AE016877">
    <property type="protein sequence ID" value="AAP10866.1"/>
    <property type="molecule type" value="Genomic_DNA"/>
</dbReference>
<dbReference type="RefSeq" id="NP_833665.1">
    <property type="nucleotide sequence ID" value="NC_004722.1"/>
</dbReference>
<dbReference type="RefSeq" id="WP_001188743.1">
    <property type="nucleotide sequence ID" value="NZ_CP138336.1"/>
</dbReference>
<dbReference type="SMR" id="Q819N0"/>
<dbReference type="STRING" id="226900.BC_3946"/>
<dbReference type="KEGG" id="bce:BC3946"/>
<dbReference type="PATRIC" id="fig|226900.8.peg.4070"/>
<dbReference type="HOGENOM" id="CLU_041525_3_1_9"/>
<dbReference type="OrthoDB" id="9816428at2"/>
<dbReference type="UniPathway" id="UPA00269">
    <property type="reaction ID" value="UER00713"/>
</dbReference>
<dbReference type="Proteomes" id="UP000001417">
    <property type="component" value="Chromosome"/>
</dbReference>
<dbReference type="GO" id="GO:0005886">
    <property type="term" value="C:plasma membrane"/>
    <property type="evidence" value="ECO:0007669"/>
    <property type="project" value="UniProtKB-SubCell"/>
</dbReference>
<dbReference type="GO" id="GO:0046872">
    <property type="term" value="F:metal ion binding"/>
    <property type="evidence" value="ECO:0007669"/>
    <property type="project" value="UniProtKB-KW"/>
</dbReference>
<dbReference type="GO" id="GO:0016653">
    <property type="term" value="F:oxidoreductase activity, acting on NAD(P)H, heme protein as acceptor"/>
    <property type="evidence" value="ECO:0007669"/>
    <property type="project" value="InterPro"/>
</dbReference>
<dbReference type="GO" id="GO:0006784">
    <property type="term" value="P:heme A biosynthetic process"/>
    <property type="evidence" value="ECO:0007669"/>
    <property type="project" value="UniProtKB-UniRule"/>
</dbReference>
<dbReference type="HAMAP" id="MF_01664">
    <property type="entry name" value="HemeA_synth_type1"/>
    <property type="match status" value="1"/>
</dbReference>
<dbReference type="InterPro" id="IPR003780">
    <property type="entry name" value="COX15/CtaA_fam"/>
</dbReference>
<dbReference type="InterPro" id="IPR050450">
    <property type="entry name" value="COX15/CtaA_HemeA_synthase"/>
</dbReference>
<dbReference type="InterPro" id="IPR023755">
    <property type="entry name" value="HemeA_Synthase_type1"/>
</dbReference>
<dbReference type="PANTHER" id="PTHR35457">
    <property type="entry name" value="HEME A SYNTHASE"/>
    <property type="match status" value="1"/>
</dbReference>
<dbReference type="PANTHER" id="PTHR35457:SF1">
    <property type="entry name" value="HEME A SYNTHASE"/>
    <property type="match status" value="1"/>
</dbReference>
<dbReference type="Pfam" id="PF02628">
    <property type="entry name" value="COX15-CtaA"/>
    <property type="match status" value="1"/>
</dbReference>
<protein>
    <recommendedName>
        <fullName evidence="1">Heme A synthase</fullName>
        <shortName evidence="1">HAS</shortName>
        <ecNumber evidence="1">1.17.99.9</ecNumber>
    </recommendedName>
    <alternativeName>
        <fullName evidence="1">Cytochrome aa3-controlling protein</fullName>
    </alternativeName>
</protein>
<reference key="1">
    <citation type="journal article" date="2003" name="Nature">
        <title>Genome sequence of Bacillus cereus and comparative analysis with Bacillus anthracis.</title>
        <authorList>
            <person name="Ivanova N."/>
            <person name="Sorokin A."/>
            <person name="Anderson I."/>
            <person name="Galleron N."/>
            <person name="Candelon B."/>
            <person name="Kapatral V."/>
            <person name="Bhattacharyya A."/>
            <person name="Reznik G."/>
            <person name="Mikhailova N."/>
            <person name="Lapidus A."/>
            <person name="Chu L."/>
            <person name="Mazur M."/>
            <person name="Goltsman E."/>
            <person name="Larsen N."/>
            <person name="D'Souza M."/>
            <person name="Walunas T."/>
            <person name="Grechkin Y."/>
            <person name="Pusch G."/>
            <person name="Haselkorn R."/>
            <person name="Fonstein M."/>
            <person name="Ehrlich S.D."/>
            <person name="Overbeek R."/>
            <person name="Kyrpides N.C."/>
        </authorList>
    </citation>
    <scope>NUCLEOTIDE SEQUENCE [LARGE SCALE GENOMIC DNA]</scope>
    <source>
        <strain>ATCC 14579 / DSM 31 / CCUG 7414 / JCM 2152 / NBRC 15305 / NCIMB 9373 / NCTC 2599 / NRRL B-3711</strain>
    </source>
</reference>
<organism>
    <name type="scientific">Bacillus cereus (strain ATCC 14579 / DSM 31 / CCUG 7414 / JCM 2152 / NBRC 15305 / NCIMB 9373 / NCTC 2599 / NRRL B-3711)</name>
    <dbReference type="NCBI Taxonomy" id="226900"/>
    <lineage>
        <taxon>Bacteria</taxon>
        <taxon>Bacillati</taxon>
        <taxon>Bacillota</taxon>
        <taxon>Bacilli</taxon>
        <taxon>Bacillales</taxon>
        <taxon>Bacillaceae</taxon>
        <taxon>Bacillus</taxon>
        <taxon>Bacillus cereus group</taxon>
    </lineage>
</organism>
<name>CTAA_BACCR</name>
<keyword id="KW-1003">Cell membrane</keyword>
<keyword id="KW-1015">Disulfide bond</keyword>
<keyword id="KW-0350">Heme biosynthesis</keyword>
<keyword id="KW-0408">Iron</keyword>
<keyword id="KW-0472">Membrane</keyword>
<keyword id="KW-0479">Metal-binding</keyword>
<keyword id="KW-0560">Oxidoreductase</keyword>
<keyword id="KW-1185">Reference proteome</keyword>
<keyword id="KW-0812">Transmembrane</keyword>
<keyword id="KW-1133">Transmembrane helix</keyword>
<comment type="function">
    <text evidence="1">Catalyzes the conversion of heme O to heme A by two successive hydroxylations of the methyl group at C8. The first hydroxylation forms heme I, the second hydroxylation results in an unstable dihydroxymethyl group, which spontaneously dehydrates, resulting in the formyl group of heme A.</text>
</comment>
<comment type="catalytic activity">
    <reaction evidence="1">
        <text>Fe(II)-heme o + 2 A + H2O = Fe(II)-heme a + 2 AH2</text>
        <dbReference type="Rhea" id="RHEA:63388"/>
        <dbReference type="ChEBI" id="CHEBI:13193"/>
        <dbReference type="ChEBI" id="CHEBI:15377"/>
        <dbReference type="ChEBI" id="CHEBI:17499"/>
        <dbReference type="ChEBI" id="CHEBI:60530"/>
        <dbReference type="ChEBI" id="CHEBI:61715"/>
        <dbReference type="EC" id="1.17.99.9"/>
    </reaction>
    <physiologicalReaction direction="left-to-right" evidence="1">
        <dbReference type="Rhea" id="RHEA:63389"/>
    </physiologicalReaction>
</comment>
<comment type="cofactor">
    <cofactor evidence="1">
        <name>heme b</name>
        <dbReference type="ChEBI" id="CHEBI:60344"/>
    </cofactor>
</comment>
<comment type="pathway">
    <text evidence="1">Porphyrin-containing compound metabolism; heme A biosynthesis; heme A from heme O: step 1/1.</text>
</comment>
<comment type="subunit">
    <text evidence="1">Interacts with CtaB.</text>
</comment>
<comment type="subcellular location">
    <subcellularLocation>
        <location evidence="1">Cell membrane</location>
        <topology evidence="1">Multi-pass membrane protein</topology>
    </subcellularLocation>
</comment>
<comment type="domain">
    <text evidence="1">The N-half (TM1-TM4) and C-half (TM5-TM8) domains are connected by an intracellular loop. Each domain is formed from four-helix bundles and they align in a pseudo twofold symmetry manner. The N-half domain is the substrate-heme O binding domain and the C-half domain is the cofactor heme B binding domain.</text>
</comment>
<comment type="domain">
    <text evidence="1">The cysteines of disulfide bond Cys-35 and Cys-42 may be involved in transfer of reducing equivalents from quinol in the membrane to the active site of the enzyme.</text>
</comment>
<comment type="similarity">
    <text evidence="1">Belongs to the COX15/CtaA family. Type 1 subfamily.</text>
</comment>
<evidence type="ECO:0000255" key="1">
    <source>
        <dbReference type="HAMAP-Rule" id="MF_01664"/>
    </source>
</evidence>